<accession>B2ILU5</accession>
<comment type="function">
    <text evidence="1">Involved in protein export. Acts as a chaperone by maintaining the newly synthesized protein in an open conformation. Functions as a peptidyl-prolyl cis-trans isomerase.</text>
</comment>
<comment type="catalytic activity">
    <reaction evidence="1">
        <text>[protein]-peptidylproline (omega=180) = [protein]-peptidylproline (omega=0)</text>
        <dbReference type="Rhea" id="RHEA:16237"/>
        <dbReference type="Rhea" id="RHEA-COMP:10747"/>
        <dbReference type="Rhea" id="RHEA-COMP:10748"/>
        <dbReference type="ChEBI" id="CHEBI:83833"/>
        <dbReference type="ChEBI" id="CHEBI:83834"/>
        <dbReference type="EC" id="5.2.1.8"/>
    </reaction>
</comment>
<comment type="subcellular location">
    <subcellularLocation>
        <location>Cytoplasm</location>
    </subcellularLocation>
    <text evidence="1">About half TF is bound to the ribosome near the polypeptide exit tunnel while the other half is free in the cytoplasm.</text>
</comment>
<comment type="domain">
    <text evidence="1">Consists of 3 domains; the N-terminus binds the ribosome, the middle domain has PPIase activity, while the C-terminus has intrinsic chaperone activity on its own.</text>
</comment>
<comment type="similarity">
    <text evidence="1">Belongs to the FKBP-type PPIase family. Tig subfamily.</text>
</comment>
<sequence length="427" mass="47282">MSVSFENKETNRGVLTFTISQDQIKPELDRVFKSVKKSLNVPGFRKGHLPRPIFDKKFGEESLYQDVMNALLPNAYEAAVKEAGLEVVAQPKIDVTSMEKGQDWVIAAEVVTKPEVKLGDYKNLEVSVDVEKEVTDADVEERIERERNNLAELVIKEAAAENGDTVVIDFVGSIDGVEFDGGKGENFSLGLGSGQFIPGFEDQLVGHSAGETVDVIVTFPEDYQAEDLAGKEAKFVTTIHEVKAKEVPALDDELAKDIDEEVETLADLKEKYRKELAAAKEEAYKDAVEGAAIDTAVENAEIVELPEEMIHEEVHRSVNEFLGNLQRQGINPDMYFQITGTTQEDLHNQYQAEAESRTKTNLVIEAVAKAEGFDASEEEIQKEVEQLAADYNMEVAQVQNLLSADMLKHDITIKKAVELITSTATVK</sequence>
<organism>
    <name type="scientific">Streptococcus pneumoniae (strain CGSP14)</name>
    <dbReference type="NCBI Taxonomy" id="516950"/>
    <lineage>
        <taxon>Bacteria</taxon>
        <taxon>Bacillati</taxon>
        <taxon>Bacillota</taxon>
        <taxon>Bacilli</taxon>
        <taxon>Lactobacillales</taxon>
        <taxon>Streptococcaceae</taxon>
        <taxon>Streptococcus</taxon>
    </lineage>
</organism>
<keyword id="KW-0131">Cell cycle</keyword>
<keyword id="KW-0132">Cell division</keyword>
<keyword id="KW-0143">Chaperone</keyword>
<keyword id="KW-0963">Cytoplasm</keyword>
<keyword id="KW-0413">Isomerase</keyword>
<keyword id="KW-0697">Rotamase</keyword>
<proteinExistence type="inferred from homology"/>
<feature type="chain" id="PRO_1000115589" description="Trigger factor">
    <location>
        <begin position="1"/>
        <end position="427"/>
    </location>
</feature>
<feature type="domain" description="PPIase FKBP-type" evidence="1">
    <location>
        <begin position="163"/>
        <end position="248"/>
    </location>
</feature>
<evidence type="ECO:0000255" key="1">
    <source>
        <dbReference type="HAMAP-Rule" id="MF_00303"/>
    </source>
</evidence>
<gene>
    <name evidence="1" type="primary">tig</name>
    <name type="ordered locus">SPCG_0399</name>
</gene>
<name>TIG_STRPS</name>
<protein>
    <recommendedName>
        <fullName evidence="1">Trigger factor</fullName>
        <shortName evidence="1">TF</shortName>
        <ecNumber evidence="1">5.2.1.8</ecNumber>
    </recommendedName>
    <alternativeName>
        <fullName evidence="1">PPIase</fullName>
    </alternativeName>
</protein>
<dbReference type="EC" id="5.2.1.8" evidence="1"/>
<dbReference type="EMBL" id="CP001033">
    <property type="protein sequence ID" value="ACB89651.1"/>
    <property type="molecule type" value="Genomic_DNA"/>
</dbReference>
<dbReference type="RefSeq" id="WP_000116465.1">
    <property type="nucleotide sequence ID" value="NC_010582.1"/>
</dbReference>
<dbReference type="SMR" id="B2ILU5"/>
<dbReference type="KEGG" id="spw:SPCG_0399"/>
<dbReference type="HOGENOM" id="CLU_033058_3_2_9"/>
<dbReference type="GO" id="GO:0005737">
    <property type="term" value="C:cytoplasm"/>
    <property type="evidence" value="ECO:0007669"/>
    <property type="project" value="UniProtKB-SubCell"/>
</dbReference>
<dbReference type="GO" id="GO:0003755">
    <property type="term" value="F:peptidyl-prolyl cis-trans isomerase activity"/>
    <property type="evidence" value="ECO:0007669"/>
    <property type="project" value="UniProtKB-UniRule"/>
</dbReference>
<dbReference type="GO" id="GO:0044183">
    <property type="term" value="F:protein folding chaperone"/>
    <property type="evidence" value="ECO:0007669"/>
    <property type="project" value="TreeGrafter"/>
</dbReference>
<dbReference type="GO" id="GO:0043022">
    <property type="term" value="F:ribosome binding"/>
    <property type="evidence" value="ECO:0007669"/>
    <property type="project" value="TreeGrafter"/>
</dbReference>
<dbReference type="GO" id="GO:0051083">
    <property type="term" value="P:'de novo' cotranslational protein folding"/>
    <property type="evidence" value="ECO:0007669"/>
    <property type="project" value="TreeGrafter"/>
</dbReference>
<dbReference type="GO" id="GO:0051301">
    <property type="term" value="P:cell division"/>
    <property type="evidence" value="ECO:0007669"/>
    <property type="project" value="UniProtKB-KW"/>
</dbReference>
<dbReference type="GO" id="GO:0061077">
    <property type="term" value="P:chaperone-mediated protein folding"/>
    <property type="evidence" value="ECO:0007669"/>
    <property type="project" value="TreeGrafter"/>
</dbReference>
<dbReference type="GO" id="GO:0015031">
    <property type="term" value="P:protein transport"/>
    <property type="evidence" value="ECO:0007669"/>
    <property type="project" value="UniProtKB-UniRule"/>
</dbReference>
<dbReference type="GO" id="GO:0043335">
    <property type="term" value="P:protein unfolding"/>
    <property type="evidence" value="ECO:0007669"/>
    <property type="project" value="TreeGrafter"/>
</dbReference>
<dbReference type="FunFam" id="3.10.50.40:FF:000001">
    <property type="entry name" value="Trigger factor"/>
    <property type="match status" value="1"/>
</dbReference>
<dbReference type="Gene3D" id="3.10.50.40">
    <property type="match status" value="1"/>
</dbReference>
<dbReference type="Gene3D" id="3.30.70.1050">
    <property type="entry name" value="Trigger factor ribosome-binding domain"/>
    <property type="match status" value="1"/>
</dbReference>
<dbReference type="Gene3D" id="1.10.3120.10">
    <property type="entry name" value="Trigger factor, C-terminal domain"/>
    <property type="match status" value="1"/>
</dbReference>
<dbReference type="HAMAP" id="MF_00303">
    <property type="entry name" value="Trigger_factor_Tig"/>
    <property type="match status" value="1"/>
</dbReference>
<dbReference type="InterPro" id="IPR046357">
    <property type="entry name" value="PPIase_dom_sf"/>
</dbReference>
<dbReference type="InterPro" id="IPR001179">
    <property type="entry name" value="PPIase_FKBP_dom"/>
</dbReference>
<dbReference type="InterPro" id="IPR005215">
    <property type="entry name" value="Trig_fac"/>
</dbReference>
<dbReference type="InterPro" id="IPR008880">
    <property type="entry name" value="Trigger_fac_C"/>
</dbReference>
<dbReference type="InterPro" id="IPR037041">
    <property type="entry name" value="Trigger_fac_C_sf"/>
</dbReference>
<dbReference type="InterPro" id="IPR008881">
    <property type="entry name" value="Trigger_fac_ribosome-bd_bac"/>
</dbReference>
<dbReference type="InterPro" id="IPR036611">
    <property type="entry name" value="Trigger_fac_ribosome-bd_sf"/>
</dbReference>
<dbReference type="InterPro" id="IPR027304">
    <property type="entry name" value="Trigger_fact/SurA_dom_sf"/>
</dbReference>
<dbReference type="NCBIfam" id="TIGR00115">
    <property type="entry name" value="tig"/>
    <property type="match status" value="1"/>
</dbReference>
<dbReference type="PANTHER" id="PTHR30560">
    <property type="entry name" value="TRIGGER FACTOR CHAPERONE AND PEPTIDYL-PROLYL CIS/TRANS ISOMERASE"/>
    <property type="match status" value="1"/>
</dbReference>
<dbReference type="PANTHER" id="PTHR30560:SF3">
    <property type="entry name" value="TRIGGER FACTOR-LIKE PROTEIN TIG, CHLOROPLASTIC"/>
    <property type="match status" value="1"/>
</dbReference>
<dbReference type="Pfam" id="PF00254">
    <property type="entry name" value="FKBP_C"/>
    <property type="match status" value="1"/>
</dbReference>
<dbReference type="Pfam" id="PF05698">
    <property type="entry name" value="Trigger_C"/>
    <property type="match status" value="1"/>
</dbReference>
<dbReference type="Pfam" id="PF05697">
    <property type="entry name" value="Trigger_N"/>
    <property type="match status" value="1"/>
</dbReference>
<dbReference type="PIRSF" id="PIRSF003095">
    <property type="entry name" value="Trigger_factor"/>
    <property type="match status" value="1"/>
</dbReference>
<dbReference type="SUPFAM" id="SSF54534">
    <property type="entry name" value="FKBP-like"/>
    <property type="match status" value="1"/>
</dbReference>
<dbReference type="SUPFAM" id="SSF109998">
    <property type="entry name" value="Triger factor/SurA peptide-binding domain-like"/>
    <property type="match status" value="1"/>
</dbReference>
<dbReference type="SUPFAM" id="SSF102735">
    <property type="entry name" value="Trigger factor ribosome-binding domain"/>
    <property type="match status" value="1"/>
</dbReference>
<dbReference type="PROSITE" id="PS50059">
    <property type="entry name" value="FKBP_PPIASE"/>
    <property type="match status" value="1"/>
</dbReference>
<reference key="1">
    <citation type="journal article" date="2009" name="BMC Genomics">
        <title>Genome evolution driven by host adaptations results in a more virulent and antimicrobial-resistant Streptococcus pneumoniae serotype 14.</title>
        <authorList>
            <person name="Ding F."/>
            <person name="Tang P."/>
            <person name="Hsu M.-H."/>
            <person name="Cui P."/>
            <person name="Hu S."/>
            <person name="Yu J."/>
            <person name="Chiu C.-H."/>
        </authorList>
    </citation>
    <scope>NUCLEOTIDE SEQUENCE [LARGE SCALE GENOMIC DNA]</scope>
    <source>
        <strain>CGSP14</strain>
    </source>
</reference>